<keyword id="KW-0007">Acetylation</keyword>
<keyword id="KW-0010">Activator</keyword>
<keyword id="KW-0025">Alternative splicing</keyword>
<keyword id="KW-0539">Nucleus</keyword>
<keyword id="KW-1185">Reference proteome</keyword>
<keyword id="KW-0677">Repeat</keyword>
<keyword id="KW-0804">Transcription</keyword>
<keyword id="KW-0805">Transcription regulation</keyword>
<comment type="function">
    <text evidence="1">Appears to function synergistically with RBM14 as a transcriptional coactivator. Component of SWI/SNF chromatin remodeling subcomplex GBAF that carries out key enzymatic activities, changing chromatin structure by altering DNA-histone contacts within a nucleosome in an ATP-dependent manner.</text>
</comment>
<comment type="subunit">
    <text evidence="1">Interacts with MLLT10. Isoform 1 interacts with RBM14 isoform 1. Isoform 2 interacts with RBM14 isoform 1. Component of the multiprotein chromatin-remodeling complexes SWI/SNF: SWI/SNF-A (BAF), SWI/SNF-B (PBAF) and related complexes. The canonical complex contains a catalytic subunit (either SMARCA4/BRG1/BAF190A or SMARCA2/BRM/BAF190B) and at least SMARCE1, ACTL6A/BAF53, SMARCC1/BAF155, SMARCC2/BAF170, and SMARCB1/SNF5/BAF47. Other subunits specific to each of the complexes may also be present permitting several possible combinations developmentally and tissue specific. Component of the SWI/SNF (GBAF) subcomplex, which includes at least BICRA or BICRAL (mutually exclusive), BRD9, SS18, the core BAF subunits, SMARCA2/BRM, SMARCA4/BRG1/BAF190A, ACTL6A/BAF53, SMARCC1/BAF155, and SMARCD1/BAF60A.</text>
</comment>
<comment type="subcellular location">
    <subcellularLocation>
        <location evidence="1">Nucleus</location>
    </subcellularLocation>
</comment>
<comment type="alternative products">
    <event type="alternative splicing"/>
    <isoform>
        <id>Q5RFQ1-1</id>
        <name>1</name>
        <sequence type="displayed"/>
    </isoform>
    <isoform>
        <id>Q5RFQ1-2</id>
        <name>2</name>
        <sequence type="described" ref="VSP_035802"/>
    </isoform>
</comment>
<comment type="similarity">
    <text evidence="5">Belongs to the SS18 family.</text>
</comment>
<accession>Q5RFQ1</accession>
<accession>Q5R5S5</accession>
<feature type="initiator methionine" description="Removed" evidence="1">
    <location>
        <position position="1"/>
    </location>
</feature>
<feature type="chain" id="PRO_0000354680" description="Protein SSXT">
    <location>
        <begin position="2"/>
        <end position="418"/>
    </location>
</feature>
<feature type="repeat" description="1">
    <location>
        <begin position="344"/>
        <end position="356"/>
    </location>
</feature>
<feature type="repeat" description="2">
    <location>
        <begin position="357"/>
        <end position="369"/>
    </location>
</feature>
<feature type="region of interest" description="Disordered" evidence="3">
    <location>
        <begin position="76"/>
        <end position="118"/>
    </location>
</feature>
<feature type="region of interest" description="Disordered" evidence="3">
    <location>
        <begin position="199"/>
        <end position="418"/>
    </location>
</feature>
<feature type="region of interest" description="2 X 13 AA imperfect tandem repeats">
    <location>
        <begin position="344"/>
        <end position="369"/>
    </location>
</feature>
<feature type="short sequence motif" description="SH2-binding" evidence="2">
    <location>
        <begin position="50"/>
        <end position="53"/>
    </location>
</feature>
<feature type="short sequence motif" description="SH2-binding" evidence="2">
    <location>
        <begin position="374"/>
        <end position="377"/>
    </location>
</feature>
<feature type="short sequence motif" description="SH3-binding" evidence="2">
    <location>
        <begin position="392"/>
        <end position="401"/>
    </location>
</feature>
<feature type="short sequence motif" description="SH2-binding" evidence="2">
    <location>
        <begin position="413"/>
        <end position="416"/>
    </location>
</feature>
<feature type="compositionally biased region" description="Low complexity" evidence="3">
    <location>
        <begin position="199"/>
        <end position="211"/>
    </location>
</feature>
<feature type="compositionally biased region" description="Low complexity" evidence="3">
    <location>
        <begin position="225"/>
        <end position="251"/>
    </location>
</feature>
<feature type="compositionally biased region" description="Basic and acidic residues" evidence="3">
    <location>
        <begin position="309"/>
        <end position="318"/>
    </location>
</feature>
<feature type="compositionally biased region" description="Low complexity" evidence="3">
    <location>
        <begin position="328"/>
        <end position="337"/>
    </location>
</feature>
<feature type="compositionally biased region" description="Low complexity" evidence="3">
    <location>
        <begin position="345"/>
        <end position="366"/>
    </location>
</feature>
<feature type="compositionally biased region" description="Low complexity" evidence="3">
    <location>
        <begin position="376"/>
        <end position="393"/>
    </location>
</feature>
<feature type="compositionally biased region" description="Pro residues" evidence="3">
    <location>
        <begin position="394"/>
        <end position="403"/>
    </location>
</feature>
<feature type="compositionally biased region" description="Low complexity" evidence="3">
    <location>
        <begin position="404"/>
        <end position="418"/>
    </location>
</feature>
<feature type="modified residue" description="N-acetylserine" evidence="1">
    <location>
        <position position="2"/>
    </location>
</feature>
<feature type="splice variant" id="VSP_035802" description="In isoform 2." evidence="4">
    <location>
        <begin position="1"/>
        <end position="23"/>
    </location>
</feature>
<feature type="sequence conflict" description="In Ref. 1; CAH89406." evidence="5" ref="1">
    <original>N</original>
    <variation>D</variation>
    <location>
        <position position="147"/>
    </location>
</feature>
<name>SSXT_PONAB</name>
<proteinExistence type="evidence at transcript level"/>
<dbReference type="EMBL" id="CR857101">
    <property type="protein sequence ID" value="CAH89406.1"/>
    <property type="molecule type" value="mRNA"/>
</dbReference>
<dbReference type="EMBL" id="CR860781">
    <property type="protein sequence ID" value="CAH92891.1"/>
    <property type="molecule type" value="mRNA"/>
</dbReference>
<dbReference type="RefSeq" id="NP_001126694.1">
    <molecule id="Q5RFQ1-2"/>
    <property type="nucleotide sequence ID" value="NM_001133222.2"/>
</dbReference>
<dbReference type="RefSeq" id="NP_001128735.2">
    <molecule id="Q5RFQ1-1"/>
    <property type="nucleotide sequence ID" value="NM_001135263.3"/>
</dbReference>
<dbReference type="RefSeq" id="XP_024091547.1">
    <molecule id="Q5RFQ1-2"/>
    <property type="nucleotide sequence ID" value="XM_024235779.3"/>
</dbReference>
<dbReference type="SMR" id="Q5RFQ1"/>
<dbReference type="FunCoup" id="Q5RFQ1">
    <property type="interactions" value="2656"/>
</dbReference>
<dbReference type="STRING" id="9601.ENSPPYP00000010187"/>
<dbReference type="Ensembl" id="ENSPPYT00000010592.3">
    <molecule id="Q5RFQ1-1"/>
    <property type="protein sequence ID" value="ENSPPYP00000010188.2"/>
    <property type="gene ID" value="ENSPPYG00000009075.3"/>
</dbReference>
<dbReference type="GeneID" id="100189625"/>
<dbReference type="KEGG" id="pon:100189625"/>
<dbReference type="CTD" id="6760"/>
<dbReference type="eggNOG" id="KOG3227">
    <property type="taxonomic scope" value="Eukaryota"/>
</dbReference>
<dbReference type="GeneTree" id="ENSGT00940000156352"/>
<dbReference type="HOGENOM" id="CLU_054580_1_0_1"/>
<dbReference type="InParanoid" id="Q5RFQ1"/>
<dbReference type="OrthoDB" id="10265171at2759"/>
<dbReference type="Proteomes" id="UP000001595">
    <property type="component" value="Chromosome 18"/>
</dbReference>
<dbReference type="GO" id="GO:0005654">
    <property type="term" value="C:nucleoplasm"/>
    <property type="evidence" value="ECO:0007669"/>
    <property type="project" value="UniProtKB-ARBA"/>
</dbReference>
<dbReference type="GO" id="GO:0003713">
    <property type="term" value="F:transcription coactivator activity"/>
    <property type="evidence" value="ECO:0007669"/>
    <property type="project" value="TreeGrafter"/>
</dbReference>
<dbReference type="GO" id="GO:0045944">
    <property type="term" value="P:positive regulation of transcription by RNA polymerase II"/>
    <property type="evidence" value="ECO:0007669"/>
    <property type="project" value="TreeGrafter"/>
</dbReference>
<dbReference type="InterPro" id="IPR007726">
    <property type="entry name" value="SS18_N"/>
</dbReference>
<dbReference type="PANTHER" id="PTHR23107:SF2">
    <property type="entry name" value="PROTEIN SSXT"/>
    <property type="match status" value="1"/>
</dbReference>
<dbReference type="PANTHER" id="PTHR23107">
    <property type="entry name" value="SYNOVIAL SARCOMA ASSOCIATED SS18 PROTEIN"/>
    <property type="match status" value="1"/>
</dbReference>
<dbReference type="Pfam" id="PF05030">
    <property type="entry name" value="SSXT"/>
    <property type="match status" value="1"/>
</dbReference>
<sequence length="418" mass="45956">MSVAFAAPRQRGKGEITPAAIQKMLDDNNHLIQCIMDSQNKGKTSECSQYQQMLHTNLVYLATIADSNQNMQSLLPAPPTQNMPMGPGGMNQSGPPPPPRSHNMPSDGMVGGGPPAPHMQNQMNGQMPGPNHMPMQGPGPNQLNMTNSSMNMPSSSHGSMGGYNHSVPSSQSMPVQNQMTMSQGQPMGNYGPRPNMNMQPNQGPMMHQQPPSQQYNMPQGGGQHYQGQQPPMGMMGQVNQGNHMMGQRQIPPYRPPQQGPPQQYSGQEDYYGDQYSHGGQGPPEGMNQQYYPDGHNDYGYQQPSYPEQGYDRPYEDSSQHYYEGGNSQYGQQQDAYQGPPPQQGYPPQQQQYPGQQGYPGQQQGYGPSQGGPGPQYPNYPQGQGQQYGGYRPTQPGPPQPPQQRPYGYDQGQYGNYQQ</sequence>
<evidence type="ECO:0000250" key="1">
    <source>
        <dbReference type="UniProtKB" id="Q15532"/>
    </source>
</evidence>
<evidence type="ECO:0000255" key="2"/>
<evidence type="ECO:0000256" key="3">
    <source>
        <dbReference type="SAM" id="MobiDB-lite"/>
    </source>
</evidence>
<evidence type="ECO:0000303" key="4">
    <source ref="1"/>
</evidence>
<evidence type="ECO:0000305" key="5"/>
<gene>
    <name type="primary">SS18</name>
</gene>
<reference key="1">
    <citation type="submission" date="2004-11" db="EMBL/GenBank/DDBJ databases">
        <authorList>
            <consortium name="The German cDNA consortium"/>
        </authorList>
    </citation>
    <scope>NUCLEOTIDE SEQUENCE [LARGE SCALE MRNA] (ISOFORMS 1 AND 2)</scope>
    <source>
        <tissue>Brain cortex</tissue>
        <tissue>Kidney</tissue>
    </source>
</reference>
<organism>
    <name type="scientific">Pongo abelii</name>
    <name type="common">Sumatran orangutan</name>
    <name type="synonym">Pongo pygmaeus abelii</name>
    <dbReference type="NCBI Taxonomy" id="9601"/>
    <lineage>
        <taxon>Eukaryota</taxon>
        <taxon>Metazoa</taxon>
        <taxon>Chordata</taxon>
        <taxon>Craniata</taxon>
        <taxon>Vertebrata</taxon>
        <taxon>Euteleostomi</taxon>
        <taxon>Mammalia</taxon>
        <taxon>Eutheria</taxon>
        <taxon>Euarchontoglires</taxon>
        <taxon>Primates</taxon>
        <taxon>Haplorrhini</taxon>
        <taxon>Catarrhini</taxon>
        <taxon>Hominidae</taxon>
        <taxon>Pongo</taxon>
    </lineage>
</organism>
<protein>
    <recommendedName>
        <fullName>Protein SSXT</fullName>
    </recommendedName>
</protein>